<dbReference type="EMBL" id="Z26878">
    <property type="protein sequence ID" value="CAA81518.1"/>
    <property type="molecule type" value="Genomic_DNA"/>
</dbReference>
<dbReference type="EMBL" id="Z28169">
    <property type="protein sequence ID" value="CAA82012.1"/>
    <property type="molecule type" value="Genomic_DNA"/>
</dbReference>
<dbReference type="EMBL" id="AY693311">
    <property type="protein sequence ID" value="AAT93330.1"/>
    <property type="molecule type" value="Genomic_DNA"/>
</dbReference>
<dbReference type="PIR" id="S37999">
    <property type="entry name" value="S37999"/>
</dbReference>
<dbReference type="PaxDb" id="4932-YKL169C"/>
<dbReference type="EnsemblFungi" id="YKL169C_mRNA">
    <property type="protein sequence ID" value="YKL169C"/>
    <property type="gene ID" value="YKL169C"/>
</dbReference>
<dbReference type="AGR" id="SGD:S000001652"/>
<dbReference type="SGD" id="S000001652">
    <property type="gene designation" value="YKL169C"/>
</dbReference>
<dbReference type="HOGENOM" id="CLU_1972178_0_0_1"/>
<evidence type="ECO:0000305" key="1"/>
<evidence type="ECO:0000305" key="2">
    <source>
    </source>
</evidence>
<name>YKQ9_YEAST</name>
<comment type="miscellaneous">
    <text evidence="1">Partially overlaps MRPL38.</text>
</comment>
<comment type="caution">
    <text evidence="2">Product of a dubious gene prediction unlikely to encode a functional protein. Because of that it is not part of the S.cerevisiae S288c complete/reference proteome set.</text>
</comment>
<gene>
    <name type="ordered locus">YKL169C</name>
    <name type="ORF">YKL633</name>
</gene>
<organism>
    <name type="scientific">Saccharomyces cerevisiae (strain ATCC 204508 / S288c)</name>
    <name type="common">Baker's yeast</name>
    <dbReference type="NCBI Taxonomy" id="559292"/>
    <lineage>
        <taxon>Eukaryota</taxon>
        <taxon>Fungi</taxon>
        <taxon>Dikarya</taxon>
        <taxon>Ascomycota</taxon>
        <taxon>Saccharomycotina</taxon>
        <taxon>Saccharomycetes</taxon>
        <taxon>Saccharomycetales</taxon>
        <taxon>Saccharomycetaceae</taxon>
        <taxon>Saccharomyces</taxon>
    </lineage>
</organism>
<sequence length="127" mass="14171">MGVLLFLYDPTCQRAYLIVSLVFQCSIYTTIISHNSCPQRFTGIFINQNASSISECNGGAILSAHVTLFRPYDNCVTNITFFDTVGVGCPRNVLSQGLCFLYNTDYSVSNHCRTLGGPFPYYFNTFC</sequence>
<accession>P36050</accession>
<reference key="1">
    <citation type="journal article" date="1994" name="Yeast">
        <title>Sequencing and analysis of a 20.5 kb DNA segment located on the left arm of yeast chromosome XI.</title>
        <authorList>
            <person name="Vandenbol M."/>
            <person name="Bolle P.-A."/>
            <person name="Dion C."/>
            <person name="Portetelle D."/>
            <person name="Hilger F."/>
        </authorList>
    </citation>
    <scope>NUCLEOTIDE SEQUENCE [GENOMIC DNA]</scope>
    <source>
        <strain>ATCC 204508 / S288c</strain>
    </source>
</reference>
<reference key="2">
    <citation type="journal article" date="1994" name="Nature">
        <title>Complete DNA sequence of yeast chromosome XI.</title>
        <authorList>
            <person name="Dujon B."/>
            <person name="Alexandraki D."/>
            <person name="Andre B."/>
            <person name="Ansorge W."/>
            <person name="Baladron V."/>
            <person name="Ballesta J.P.G."/>
            <person name="Banrevi A."/>
            <person name="Bolle P.-A."/>
            <person name="Bolotin-Fukuhara M."/>
            <person name="Bossier P."/>
            <person name="Bou G."/>
            <person name="Boyer J."/>
            <person name="Buitrago M.J."/>
            <person name="Cheret G."/>
            <person name="Colleaux L."/>
            <person name="Daignan-Fornier B."/>
            <person name="del Rey F."/>
            <person name="Dion C."/>
            <person name="Domdey H."/>
            <person name="Duesterhoeft A."/>
            <person name="Duesterhus S."/>
            <person name="Entian K.-D."/>
            <person name="Erfle H."/>
            <person name="Esteban P.F."/>
            <person name="Feldmann H."/>
            <person name="Fernandes L."/>
            <person name="Fobo G.M."/>
            <person name="Fritz C."/>
            <person name="Fukuhara H."/>
            <person name="Gabel C."/>
            <person name="Gaillon L."/>
            <person name="Garcia-Cantalejo J.M."/>
            <person name="Garcia-Ramirez J.J."/>
            <person name="Gent M.E."/>
            <person name="Ghazvini M."/>
            <person name="Goffeau A."/>
            <person name="Gonzalez A."/>
            <person name="Grothues D."/>
            <person name="Guerreiro P."/>
            <person name="Hegemann J.H."/>
            <person name="Hewitt N."/>
            <person name="Hilger F."/>
            <person name="Hollenberg C.P."/>
            <person name="Horaitis O."/>
            <person name="Indge K.J."/>
            <person name="Jacquier A."/>
            <person name="James C.M."/>
            <person name="Jauniaux J.-C."/>
            <person name="Jimenez A."/>
            <person name="Keuchel H."/>
            <person name="Kirchrath L."/>
            <person name="Kleine K."/>
            <person name="Koetter P."/>
            <person name="Legrain P."/>
            <person name="Liebl S."/>
            <person name="Louis E.J."/>
            <person name="Maia e Silva A."/>
            <person name="Marck C."/>
            <person name="Monnier A.-L."/>
            <person name="Moestl D."/>
            <person name="Mueller S."/>
            <person name="Obermaier B."/>
            <person name="Oliver S.G."/>
            <person name="Pallier C."/>
            <person name="Pascolo S."/>
            <person name="Pfeiffer F."/>
            <person name="Philippsen P."/>
            <person name="Planta R.J."/>
            <person name="Pohl F.M."/>
            <person name="Pohl T.M."/>
            <person name="Poehlmann R."/>
            <person name="Portetelle D."/>
            <person name="Purnelle B."/>
            <person name="Puzos V."/>
            <person name="Ramezani Rad M."/>
            <person name="Rasmussen S.W."/>
            <person name="Remacha M.A."/>
            <person name="Revuelta J.L."/>
            <person name="Richard G.-F."/>
            <person name="Rieger M."/>
            <person name="Rodrigues-Pousada C."/>
            <person name="Rose M."/>
            <person name="Rupp T."/>
            <person name="Santos M.A."/>
            <person name="Schwager C."/>
            <person name="Sensen C."/>
            <person name="Skala J."/>
            <person name="Soares H."/>
            <person name="Sor F."/>
            <person name="Stegemann J."/>
            <person name="Tettelin H."/>
            <person name="Thierry A."/>
            <person name="Tzermia M."/>
            <person name="Urrestarazu L.A."/>
            <person name="van Dyck L."/>
            <person name="van Vliet-Reedijk J.C."/>
            <person name="Valens M."/>
            <person name="Vandenbol M."/>
            <person name="Vilela C."/>
            <person name="Vissers S."/>
            <person name="von Wettstein D."/>
            <person name="Voss H."/>
            <person name="Wiemann S."/>
            <person name="Xu G."/>
            <person name="Zimmermann J."/>
            <person name="Haasemann M."/>
            <person name="Becker I."/>
            <person name="Mewes H.-W."/>
        </authorList>
    </citation>
    <scope>NUCLEOTIDE SEQUENCE [LARGE SCALE GENOMIC DNA]</scope>
    <source>
        <strain>ATCC 204508 / S288c</strain>
    </source>
</reference>
<reference key="3">
    <citation type="journal article" date="2014" name="G3 (Bethesda)">
        <title>The reference genome sequence of Saccharomyces cerevisiae: Then and now.</title>
        <authorList>
            <person name="Engel S.R."/>
            <person name="Dietrich F.S."/>
            <person name="Fisk D.G."/>
            <person name="Binkley G."/>
            <person name="Balakrishnan R."/>
            <person name="Costanzo M.C."/>
            <person name="Dwight S.S."/>
            <person name="Hitz B.C."/>
            <person name="Karra K."/>
            <person name="Nash R.S."/>
            <person name="Weng S."/>
            <person name="Wong E.D."/>
            <person name="Lloyd P."/>
            <person name="Skrzypek M.S."/>
            <person name="Miyasato S.R."/>
            <person name="Simison M."/>
            <person name="Cherry J.M."/>
        </authorList>
    </citation>
    <scope>GENOME REANNOTATION</scope>
    <source>
        <strain>ATCC 204508 / S288c</strain>
    </source>
</reference>
<reference key="4">
    <citation type="journal article" date="2007" name="Genome Res.">
        <title>Approaching a complete repository of sequence-verified protein-encoding clones for Saccharomyces cerevisiae.</title>
        <authorList>
            <person name="Hu Y."/>
            <person name="Rolfs A."/>
            <person name="Bhullar B."/>
            <person name="Murthy T.V.S."/>
            <person name="Zhu C."/>
            <person name="Berger M.F."/>
            <person name="Camargo A.A."/>
            <person name="Kelley F."/>
            <person name="McCarron S."/>
            <person name="Jepson D."/>
            <person name="Richardson A."/>
            <person name="Raphael J."/>
            <person name="Moreira D."/>
            <person name="Taycher E."/>
            <person name="Zuo D."/>
            <person name="Mohr S."/>
            <person name="Kane M.F."/>
            <person name="Williamson J."/>
            <person name="Simpson A.J.G."/>
            <person name="Bulyk M.L."/>
            <person name="Harlow E."/>
            <person name="Marsischky G."/>
            <person name="Kolodner R.D."/>
            <person name="LaBaer J."/>
        </authorList>
    </citation>
    <scope>NUCLEOTIDE SEQUENCE [GENOMIC DNA]</scope>
    <source>
        <strain>ATCC 204508 / S288c</strain>
    </source>
</reference>
<feature type="chain" id="PRO_0000203141" description="Putative uncharacterized protein YKL169C">
    <location>
        <begin position="1"/>
        <end position="127"/>
    </location>
</feature>
<protein>
    <recommendedName>
        <fullName>Putative uncharacterized protein YKL169C</fullName>
    </recommendedName>
</protein>
<proteinExistence type="uncertain"/>